<dbReference type="EMBL" id="CP000607">
    <property type="protein sequence ID" value="ABP37748.1"/>
    <property type="molecule type" value="Genomic_DNA"/>
</dbReference>
<dbReference type="SMR" id="A4SGY9"/>
<dbReference type="STRING" id="290318.Cvib_1740"/>
<dbReference type="KEGG" id="pvi:Cvib_1740"/>
<dbReference type="eggNOG" id="COG0712">
    <property type="taxonomic scope" value="Bacteria"/>
</dbReference>
<dbReference type="HOGENOM" id="CLU_085114_4_0_10"/>
<dbReference type="OrthoDB" id="9802471at2"/>
<dbReference type="GO" id="GO:0005886">
    <property type="term" value="C:plasma membrane"/>
    <property type="evidence" value="ECO:0007669"/>
    <property type="project" value="UniProtKB-SubCell"/>
</dbReference>
<dbReference type="GO" id="GO:0045259">
    <property type="term" value="C:proton-transporting ATP synthase complex"/>
    <property type="evidence" value="ECO:0007669"/>
    <property type="project" value="UniProtKB-KW"/>
</dbReference>
<dbReference type="GO" id="GO:0046933">
    <property type="term" value="F:proton-transporting ATP synthase activity, rotational mechanism"/>
    <property type="evidence" value="ECO:0007669"/>
    <property type="project" value="UniProtKB-UniRule"/>
</dbReference>
<dbReference type="Gene3D" id="1.10.520.20">
    <property type="entry name" value="N-terminal domain of the delta subunit of the F1F0-ATP synthase"/>
    <property type="match status" value="1"/>
</dbReference>
<dbReference type="HAMAP" id="MF_01416">
    <property type="entry name" value="ATP_synth_delta_bact"/>
    <property type="match status" value="1"/>
</dbReference>
<dbReference type="InterPro" id="IPR026015">
    <property type="entry name" value="ATP_synth_OSCP/delta_N_sf"/>
</dbReference>
<dbReference type="InterPro" id="IPR000711">
    <property type="entry name" value="ATPase_OSCP/dsu"/>
</dbReference>
<dbReference type="NCBIfam" id="TIGR01145">
    <property type="entry name" value="ATP_synt_delta"/>
    <property type="match status" value="1"/>
</dbReference>
<dbReference type="PANTHER" id="PTHR11910">
    <property type="entry name" value="ATP SYNTHASE DELTA CHAIN"/>
    <property type="match status" value="1"/>
</dbReference>
<dbReference type="Pfam" id="PF00213">
    <property type="entry name" value="OSCP"/>
    <property type="match status" value="1"/>
</dbReference>
<dbReference type="PRINTS" id="PR00125">
    <property type="entry name" value="ATPASEDELTA"/>
</dbReference>
<dbReference type="SUPFAM" id="SSF47928">
    <property type="entry name" value="N-terminal domain of the delta subunit of the F1F0-ATP synthase"/>
    <property type="match status" value="1"/>
</dbReference>
<proteinExistence type="inferred from homology"/>
<evidence type="ECO:0000255" key="1">
    <source>
        <dbReference type="HAMAP-Rule" id="MF_01416"/>
    </source>
</evidence>
<comment type="function">
    <text evidence="1">F(1)F(0) ATP synthase produces ATP from ADP in the presence of a proton or sodium gradient. F-type ATPases consist of two structural domains, F(1) containing the extramembraneous catalytic core and F(0) containing the membrane proton channel, linked together by a central stalk and a peripheral stalk. During catalysis, ATP synthesis in the catalytic domain of F(1) is coupled via a rotary mechanism of the central stalk subunits to proton translocation.</text>
</comment>
<comment type="function">
    <text evidence="1">This protein is part of the stalk that links CF(0) to CF(1). It either transmits conformational changes from CF(0) to CF(1) or is implicated in proton conduction.</text>
</comment>
<comment type="subunit">
    <text evidence="1">F-type ATPases have 2 components, F(1) - the catalytic core - and F(0) - the membrane proton channel. F(1) has five subunits: alpha(3), beta(3), gamma(1), delta(1), epsilon(1). F(0) has three main subunits: a(1), b(2) and c(10-14). The alpha and beta chains form an alternating ring which encloses part of the gamma chain. F(1) is attached to F(0) by a central stalk formed by the gamma and epsilon chains, while a peripheral stalk is formed by the delta and b chains.</text>
</comment>
<comment type="subcellular location">
    <subcellularLocation>
        <location evidence="1">Cell inner membrane</location>
        <topology evidence="1">Peripheral membrane protein</topology>
    </subcellularLocation>
</comment>
<comment type="similarity">
    <text evidence="1">Belongs to the ATPase delta chain family.</text>
</comment>
<organism>
    <name type="scientific">Chlorobium phaeovibrioides (strain DSM 265 / 1930)</name>
    <name type="common">Prosthecochloris vibrioformis (strain DSM 265)</name>
    <dbReference type="NCBI Taxonomy" id="290318"/>
    <lineage>
        <taxon>Bacteria</taxon>
        <taxon>Pseudomonadati</taxon>
        <taxon>Chlorobiota</taxon>
        <taxon>Chlorobiia</taxon>
        <taxon>Chlorobiales</taxon>
        <taxon>Chlorobiaceae</taxon>
        <taxon>Chlorobium/Pelodictyon group</taxon>
        <taxon>Chlorobium</taxon>
    </lineage>
</organism>
<keyword id="KW-0066">ATP synthesis</keyword>
<keyword id="KW-0997">Cell inner membrane</keyword>
<keyword id="KW-1003">Cell membrane</keyword>
<keyword id="KW-0139">CF(1)</keyword>
<keyword id="KW-0375">Hydrogen ion transport</keyword>
<keyword id="KW-0406">Ion transport</keyword>
<keyword id="KW-0472">Membrane</keyword>
<keyword id="KW-0813">Transport</keyword>
<protein>
    <recommendedName>
        <fullName evidence="1">ATP synthase subunit delta</fullName>
    </recommendedName>
    <alternativeName>
        <fullName evidence="1">ATP synthase F(1) sector subunit delta</fullName>
    </alternativeName>
    <alternativeName>
        <fullName evidence="1">F-type ATPase subunit delta</fullName>
        <shortName evidence="1">F-ATPase subunit delta</shortName>
    </alternativeName>
</protein>
<sequence length="181" mass="19497">MSSVIASRRYAYAFLSAAEAGGFLETVTGEMQMVGETLAASRDLQRALASPLINADRKTHLLEEIFAEAVGDKMMLFLRLIAHKKRAGILGGITQEFAALLDEKNGIVNAAVTSATELSDSQQKALSRSLEGYTGKKVRSAMKIDESLIGGLSVKIGDTIFDGSVRHQLQLLREKLVAVEA</sequence>
<accession>A4SGY9</accession>
<feature type="chain" id="PRO_0000371070" description="ATP synthase subunit delta">
    <location>
        <begin position="1"/>
        <end position="181"/>
    </location>
</feature>
<gene>
    <name evidence="1" type="primary">atpH</name>
    <name type="ordered locus">Cvib_1740</name>
</gene>
<name>ATPD_CHLPM</name>
<reference key="1">
    <citation type="submission" date="2007-03" db="EMBL/GenBank/DDBJ databases">
        <title>Complete sequence of Prosthecochloris vibrioformis DSM 265.</title>
        <authorList>
            <consortium name="US DOE Joint Genome Institute"/>
            <person name="Copeland A."/>
            <person name="Lucas S."/>
            <person name="Lapidus A."/>
            <person name="Barry K."/>
            <person name="Detter J.C."/>
            <person name="Glavina del Rio T."/>
            <person name="Hammon N."/>
            <person name="Israni S."/>
            <person name="Pitluck S."/>
            <person name="Schmutz J."/>
            <person name="Larimer F."/>
            <person name="Land M."/>
            <person name="Hauser L."/>
            <person name="Mikhailova N."/>
            <person name="Li T."/>
            <person name="Overmann J."/>
            <person name="Schuster S.C."/>
            <person name="Bryant D.A."/>
            <person name="Richardson P."/>
        </authorList>
    </citation>
    <scope>NUCLEOTIDE SEQUENCE [LARGE SCALE GENOMIC DNA]</scope>
    <source>
        <strain>DSM 265 / 1930</strain>
    </source>
</reference>